<reference key="1">
    <citation type="submission" date="2004-02" db="EMBL/GenBank/DDBJ databases">
        <title>Molecular cloning, expression, phylogenetic and functional characterization of the Arabidopsis AP2/EREBP transcription factor family.</title>
        <authorList>
            <person name="Pan Y."/>
            <person name="Gong W."/>
            <person name="Liu D."/>
            <person name="Fu Q."/>
            <person name="Mei W.-Q."/>
            <person name="Song W.-Q."/>
            <person name="Ma L.-G."/>
            <person name="Luo J.-C."/>
            <person name="Deng X.-W."/>
            <person name="Zhu Y.-X."/>
        </authorList>
    </citation>
    <scope>NUCLEOTIDE SEQUENCE [MRNA]</scope>
</reference>
<reference key="2">
    <citation type="journal article" date="2000" name="DNA Res.">
        <title>Structural analysis of Arabidopsis thaliana chromosome 3. I. Sequence features of the regions of 4,504,864 bp covered by sixty P1 and TAC clones.</title>
        <authorList>
            <person name="Sato S."/>
            <person name="Nakamura Y."/>
            <person name="Kaneko T."/>
            <person name="Katoh T."/>
            <person name="Asamizu E."/>
            <person name="Tabata S."/>
        </authorList>
    </citation>
    <scope>NUCLEOTIDE SEQUENCE [LARGE SCALE GENOMIC DNA]</scope>
    <source>
        <strain>cv. Columbia</strain>
    </source>
</reference>
<reference key="3">
    <citation type="journal article" date="2017" name="Plant J.">
        <title>Araport11: a complete reannotation of the Arabidopsis thaliana reference genome.</title>
        <authorList>
            <person name="Cheng C.Y."/>
            <person name="Krishnakumar V."/>
            <person name="Chan A.P."/>
            <person name="Thibaud-Nissen F."/>
            <person name="Schobel S."/>
            <person name="Town C.D."/>
        </authorList>
    </citation>
    <scope>GENOME REANNOTATION</scope>
    <source>
        <strain>cv. Columbia</strain>
    </source>
</reference>
<reference key="4">
    <citation type="submission" date="2006-07" db="EMBL/GenBank/DDBJ databases">
        <title>Large-scale analysis of RIKEN Arabidopsis full-length (RAFL) cDNAs.</title>
        <authorList>
            <person name="Totoki Y."/>
            <person name="Seki M."/>
            <person name="Ishida J."/>
            <person name="Nakajima M."/>
            <person name="Enju A."/>
            <person name="Kamiya A."/>
            <person name="Narusaka M."/>
            <person name="Shin-i T."/>
            <person name="Nakagawa M."/>
            <person name="Sakamoto N."/>
            <person name="Oishi K."/>
            <person name="Kohara Y."/>
            <person name="Kobayashi M."/>
            <person name="Toyoda A."/>
            <person name="Sakaki Y."/>
            <person name="Sakurai T."/>
            <person name="Iida K."/>
            <person name="Akiyama K."/>
            <person name="Satou M."/>
            <person name="Toyoda T."/>
            <person name="Konagaya A."/>
            <person name="Carninci P."/>
            <person name="Kawai J."/>
            <person name="Hayashizaki Y."/>
            <person name="Shinozaki K."/>
        </authorList>
    </citation>
    <scope>NUCLEOTIDE SEQUENCE [LARGE SCALE MRNA]</scope>
    <source>
        <strain>cv. Columbia</strain>
    </source>
</reference>
<reference key="5">
    <citation type="submission" date="2006-12" db="EMBL/GenBank/DDBJ databases">
        <title>Arabidopsis ORF clones.</title>
        <authorList>
            <person name="Bautista V.R."/>
            <person name="Kim C.J."/>
            <person name="Chen H."/>
            <person name="Quinitio C."/>
            <person name="Ecker J.R."/>
        </authorList>
    </citation>
    <scope>NUCLEOTIDE SEQUENCE [LARGE SCALE MRNA]</scope>
    <source>
        <strain>cv. Columbia</strain>
    </source>
</reference>
<reference key="6">
    <citation type="journal article" date="2006" name="Plant Physiol.">
        <title>Genome-wide analysis of the ERF gene family in Arabidopsis and rice.</title>
        <authorList>
            <person name="Nakano T."/>
            <person name="Suzuki K."/>
            <person name="Fujimura T."/>
            <person name="Shinshi H."/>
        </authorList>
    </citation>
    <scope>GENE FAMILY</scope>
    <scope>NOMENCLATURE</scope>
</reference>
<feature type="chain" id="PRO_0000290430" description="Ethylene-responsive transcription factor ERF119">
    <location>
        <begin position="1"/>
        <end position="332"/>
    </location>
</feature>
<feature type="DNA-binding region" description="AP2/ERF" evidence="2">
    <location>
        <begin position="130"/>
        <end position="187"/>
    </location>
</feature>
<feature type="region of interest" description="Disordered" evidence="3">
    <location>
        <begin position="1"/>
        <end position="33"/>
    </location>
</feature>
<feature type="compositionally biased region" description="Basic residues" evidence="3">
    <location>
        <begin position="15"/>
        <end position="24"/>
    </location>
</feature>
<sequence length="332" mass="36732">MAERKKRSSIQTNKPNKKPMKKKPFQLNHLPGLSEDLKTMRKLRFVVNDPYATDYSSSEEEERSQRRKRYVCEIDLPFAQAATQAESESSYCQESNNNGVSKTKISACSKKVLRSKASPVVGRSSTTVSKPVGVRQRKWGKWAAEIRHPITKVRTWLGTYETLEQAADAYATKKLEFDALAAATSAASSVLSNESGSMISASGSSIDLDKKLVDSTLDQQAGESKKASFDFDFADLQIPEMGCFIDDSFIPNACELDFLLTEENNNQMLDDYCGIDDLDIIGLECDGPSELPDYDFSDVEIDLGLIGTTIDKYAFVDHIATTTPTPLNIACP</sequence>
<evidence type="ECO:0000250" key="1"/>
<evidence type="ECO:0000255" key="2">
    <source>
        <dbReference type="PROSITE-ProRule" id="PRU00366"/>
    </source>
</evidence>
<evidence type="ECO:0000256" key="3">
    <source>
        <dbReference type="SAM" id="MobiDB-lite"/>
    </source>
</evidence>
<evidence type="ECO:0000305" key="4"/>
<name>EF119_ARATH</name>
<protein>
    <recommendedName>
        <fullName>Ethylene-responsive transcription factor ERF119</fullName>
    </recommendedName>
</protein>
<accession>Q9LUA2</accession>
<gene>
    <name type="primary">ERF119</name>
    <name type="ordered locus">At3g25890</name>
    <name type="ORF">MPE11.5</name>
</gene>
<comment type="function">
    <text evidence="1">Probably acts as a transcriptional activator. Binds to the GCC-box pathogenesis-related promoter element. May be involved in the regulation of gene expression by stress factors and by components of stress signal transduction pathways (By similarity).</text>
</comment>
<comment type="interaction">
    <interactant intactId="EBI-15393651">
        <id>Q9LUA2</id>
    </interactant>
    <interactant intactId="EBI-4453230">
        <id>O80902</id>
        <label>CIPK22</label>
    </interactant>
    <organismsDiffer>false</organismsDiffer>
    <experiments>3</experiments>
</comment>
<comment type="subcellular location">
    <subcellularLocation>
        <location evidence="4">Nucleus</location>
    </subcellularLocation>
</comment>
<comment type="similarity">
    <text evidence="4">Belongs to the AP2/ERF transcription factor family. ERF subfamily.</text>
</comment>
<proteinExistence type="evidence at protein level"/>
<keyword id="KW-0010">Activator</keyword>
<keyword id="KW-0238">DNA-binding</keyword>
<keyword id="KW-0936">Ethylene signaling pathway</keyword>
<keyword id="KW-0539">Nucleus</keyword>
<keyword id="KW-1185">Reference proteome</keyword>
<keyword id="KW-0804">Transcription</keyword>
<keyword id="KW-0805">Transcription regulation</keyword>
<organism>
    <name type="scientific">Arabidopsis thaliana</name>
    <name type="common">Mouse-ear cress</name>
    <dbReference type="NCBI Taxonomy" id="3702"/>
    <lineage>
        <taxon>Eukaryota</taxon>
        <taxon>Viridiplantae</taxon>
        <taxon>Streptophyta</taxon>
        <taxon>Embryophyta</taxon>
        <taxon>Tracheophyta</taxon>
        <taxon>Spermatophyta</taxon>
        <taxon>Magnoliopsida</taxon>
        <taxon>eudicotyledons</taxon>
        <taxon>Gunneridae</taxon>
        <taxon>Pentapetalae</taxon>
        <taxon>rosids</taxon>
        <taxon>malvids</taxon>
        <taxon>Brassicales</taxon>
        <taxon>Brassicaceae</taxon>
        <taxon>Camelineae</taxon>
        <taxon>Arabidopsis</taxon>
    </lineage>
</organism>
<dbReference type="EMBL" id="AY560877">
    <property type="protein sequence ID" value="AAT44944.1"/>
    <property type="molecule type" value="mRNA"/>
</dbReference>
<dbReference type="EMBL" id="AB023041">
    <property type="protein sequence ID" value="BAB01051.1"/>
    <property type="molecule type" value="Genomic_DNA"/>
</dbReference>
<dbReference type="EMBL" id="CP002686">
    <property type="protein sequence ID" value="AEE77084.1"/>
    <property type="molecule type" value="Genomic_DNA"/>
</dbReference>
<dbReference type="EMBL" id="CP002686">
    <property type="protein sequence ID" value="AEE77085.1"/>
    <property type="molecule type" value="Genomic_DNA"/>
</dbReference>
<dbReference type="EMBL" id="AK229550">
    <property type="protein sequence ID" value="BAF01403.1"/>
    <property type="molecule type" value="mRNA"/>
</dbReference>
<dbReference type="EMBL" id="BT029518">
    <property type="protein sequence ID" value="ABL66774.1"/>
    <property type="molecule type" value="mRNA"/>
</dbReference>
<dbReference type="BioGRID" id="7516">
    <property type="interactions" value="22"/>
</dbReference>
<dbReference type="FunCoup" id="Q9LUA2">
    <property type="interactions" value="314"/>
</dbReference>
<dbReference type="IntAct" id="Q9LUA2">
    <property type="interactions" value="22"/>
</dbReference>
<dbReference type="STRING" id="3702.Q9LUA2"/>
<dbReference type="PaxDb" id="3702-AT3G25890.2"/>
<dbReference type="EnsemblPlants" id="AT3G25890.1">
    <property type="protein sequence ID" value="AT3G25890.1"/>
    <property type="gene ID" value="AT3G25890"/>
</dbReference>
<dbReference type="EnsemblPlants" id="AT3G25890.2">
    <property type="protein sequence ID" value="AT3G25890.2"/>
    <property type="gene ID" value="AT3G25890"/>
</dbReference>
<dbReference type="Gramene" id="AT3G25890.1">
    <property type="protein sequence ID" value="AT3G25890.1"/>
    <property type="gene ID" value="AT3G25890"/>
</dbReference>
<dbReference type="Gramene" id="AT3G25890.2">
    <property type="protein sequence ID" value="AT3G25890.2"/>
    <property type="gene ID" value="AT3G25890"/>
</dbReference>
<dbReference type="KEGG" id="ath:AT3G25890"/>
<dbReference type="Araport" id="AT3G25890"/>
<dbReference type="TAIR" id="AT3G25890">
    <property type="gene designation" value="CRF11"/>
</dbReference>
<dbReference type="eggNOG" id="ENOG502RZ0C">
    <property type="taxonomic scope" value="Eukaryota"/>
</dbReference>
<dbReference type="HOGENOM" id="CLU_062946_0_0_1"/>
<dbReference type="InParanoid" id="Q9LUA2"/>
<dbReference type="OMA" id="IRHPLEK"/>
<dbReference type="OrthoDB" id="1917565at2759"/>
<dbReference type="PhylomeDB" id="Q9LUA2"/>
<dbReference type="PRO" id="PR:Q9LUA2"/>
<dbReference type="Proteomes" id="UP000006548">
    <property type="component" value="Chromosome 3"/>
</dbReference>
<dbReference type="ExpressionAtlas" id="Q9LUA2">
    <property type="expression patterns" value="baseline and differential"/>
</dbReference>
<dbReference type="GO" id="GO:0005634">
    <property type="term" value="C:nucleus"/>
    <property type="evidence" value="ECO:0007669"/>
    <property type="project" value="UniProtKB-SubCell"/>
</dbReference>
<dbReference type="GO" id="GO:0003677">
    <property type="term" value="F:DNA binding"/>
    <property type="evidence" value="ECO:0007669"/>
    <property type="project" value="UniProtKB-KW"/>
</dbReference>
<dbReference type="GO" id="GO:0003700">
    <property type="term" value="F:DNA-binding transcription factor activity"/>
    <property type="evidence" value="ECO:0000250"/>
    <property type="project" value="TAIR"/>
</dbReference>
<dbReference type="GO" id="GO:0009873">
    <property type="term" value="P:ethylene-activated signaling pathway"/>
    <property type="evidence" value="ECO:0007669"/>
    <property type="project" value="UniProtKB-KW"/>
</dbReference>
<dbReference type="CDD" id="cd00018">
    <property type="entry name" value="AP2"/>
    <property type="match status" value="1"/>
</dbReference>
<dbReference type="FunFam" id="3.30.730.10:FF:000005">
    <property type="entry name" value="ethylene-responsive transcription factor RAP2-11"/>
    <property type="match status" value="1"/>
</dbReference>
<dbReference type="Gene3D" id="3.30.730.10">
    <property type="entry name" value="AP2/ERF domain"/>
    <property type="match status" value="1"/>
</dbReference>
<dbReference type="InterPro" id="IPR001471">
    <property type="entry name" value="AP2/ERF_dom"/>
</dbReference>
<dbReference type="InterPro" id="IPR036955">
    <property type="entry name" value="AP2/ERF_dom_sf"/>
</dbReference>
<dbReference type="InterPro" id="IPR050913">
    <property type="entry name" value="AP2/ERF_ERF_subfamily"/>
</dbReference>
<dbReference type="InterPro" id="IPR016177">
    <property type="entry name" value="DNA-bd_dom_sf"/>
</dbReference>
<dbReference type="PANTHER" id="PTHR31194:SF221">
    <property type="entry name" value="ETHYLENE-RESPONSIVE TRANSCRIPTION FACTOR ERF119"/>
    <property type="match status" value="1"/>
</dbReference>
<dbReference type="PANTHER" id="PTHR31194">
    <property type="entry name" value="SHN SHINE , DNA BINDING / TRANSCRIPTION FACTOR"/>
    <property type="match status" value="1"/>
</dbReference>
<dbReference type="Pfam" id="PF00847">
    <property type="entry name" value="AP2"/>
    <property type="match status" value="1"/>
</dbReference>
<dbReference type="PRINTS" id="PR00367">
    <property type="entry name" value="ETHRSPELEMNT"/>
</dbReference>
<dbReference type="SMART" id="SM00380">
    <property type="entry name" value="AP2"/>
    <property type="match status" value="1"/>
</dbReference>
<dbReference type="SUPFAM" id="SSF54171">
    <property type="entry name" value="DNA-binding domain"/>
    <property type="match status" value="1"/>
</dbReference>
<dbReference type="PROSITE" id="PS51032">
    <property type="entry name" value="AP2_ERF"/>
    <property type="match status" value="1"/>
</dbReference>